<reference key="1">
    <citation type="journal article" date="2009" name="Genome Biol.">
        <title>Genomic and genetic analyses of diversity and plant interactions of Pseudomonas fluorescens.</title>
        <authorList>
            <person name="Silby M.W."/>
            <person name="Cerdeno-Tarraga A.M."/>
            <person name="Vernikos G.S."/>
            <person name="Giddens S.R."/>
            <person name="Jackson R.W."/>
            <person name="Preston G.M."/>
            <person name="Zhang X.-X."/>
            <person name="Moon C.D."/>
            <person name="Gehrig S.M."/>
            <person name="Godfrey S.A.C."/>
            <person name="Knight C.G."/>
            <person name="Malone J.G."/>
            <person name="Robinson Z."/>
            <person name="Spiers A.J."/>
            <person name="Harris S."/>
            <person name="Challis G.L."/>
            <person name="Yaxley A.M."/>
            <person name="Harris D."/>
            <person name="Seeger K."/>
            <person name="Murphy L."/>
            <person name="Rutter S."/>
            <person name="Squares R."/>
            <person name="Quail M.A."/>
            <person name="Saunders E."/>
            <person name="Mavromatis K."/>
            <person name="Brettin T.S."/>
            <person name="Bentley S.D."/>
            <person name="Hothersall J."/>
            <person name="Stephens E."/>
            <person name="Thomas C.M."/>
            <person name="Parkhill J."/>
            <person name="Levy S.B."/>
            <person name="Rainey P.B."/>
            <person name="Thomson N.R."/>
        </authorList>
    </citation>
    <scope>NUCLEOTIDE SEQUENCE [LARGE SCALE GENOMIC DNA]</scope>
    <source>
        <strain>Pf0-1</strain>
    </source>
</reference>
<name>MOAA_PSEPF</name>
<sequence length="332" mass="37510">MSERVLIDGYNRRVDYLRMSVTDRCDFRCVYCMAEDMQFLPRQRVLTLEEIYQLAQSFVALGTRKIRLTGGEPLIRPGVVGLCKQIAALPGLRELCLTTNGSQLGKLASPLFDAGVKRLNVSLDSLDAERFKQMTRTGDLAQVIDGIDAARAAGFTRTKLNCVVMQGRNDHEINDLVQFAIERDLDISFIEEMPLGIISEHSRAESFFSSTQVRERIAERYTLIDSAESTHGPSRYWRLAEAPHIRLGFISPHSHNFCGTCNRVRLTVEGRLLLCLGNEHSVDLKAVLRAHPGQPERLEKAIIEAMKLKPYRHNFEVNDDVQVVRFMNMTGG</sequence>
<protein>
    <recommendedName>
        <fullName evidence="1">GTP 3',8-cyclase</fullName>
        <ecNumber evidence="1">4.1.99.22</ecNumber>
    </recommendedName>
    <alternativeName>
        <fullName evidence="1">Molybdenum cofactor biosynthesis protein A</fullName>
    </alternativeName>
</protein>
<feature type="chain" id="PRO_1000054215" description="GTP 3',8-cyclase">
    <location>
        <begin position="1"/>
        <end position="332"/>
    </location>
</feature>
<feature type="domain" description="Radical SAM core" evidence="2">
    <location>
        <begin position="9"/>
        <end position="220"/>
    </location>
</feature>
<feature type="binding site" evidence="1">
    <location>
        <position position="18"/>
    </location>
    <ligand>
        <name>GTP</name>
        <dbReference type="ChEBI" id="CHEBI:37565"/>
    </ligand>
</feature>
<feature type="binding site" evidence="1">
    <location>
        <position position="25"/>
    </location>
    <ligand>
        <name>[4Fe-4S] cluster</name>
        <dbReference type="ChEBI" id="CHEBI:49883"/>
        <label>1</label>
        <note>4Fe-4S-S-AdoMet</note>
    </ligand>
</feature>
<feature type="binding site" evidence="1">
    <location>
        <position position="29"/>
    </location>
    <ligand>
        <name>[4Fe-4S] cluster</name>
        <dbReference type="ChEBI" id="CHEBI:49883"/>
        <label>1</label>
        <note>4Fe-4S-S-AdoMet</note>
    </ligand>
</feature>
<feature type="binding site" evidence="1">
    <location>
        <position position="31"/>
    </location>
    <ligand>
        <name>S-adenosyl-L-methionine</name>
        <dbReference type="ChEBI" id="CHEBI:59789"/>
    </ligand>
</feature>
<feature type="binding site" evidence="1">
    <location>
        <position position="32"/>
    </location>
    <ligand>
        <name>[4Fe-4S] cluster</name>
        <dbReference type="ChEBI" id="CHEBI:49883"/>
        <label>1</label>
        <note>4Fe-4S-S-AdoMet</note>
    </ligand>
</feature>
<feature type="binding site" evidence="1">
    <location>
        <position position="67"/>
    </location>
    <ligand>
        <name>GTP</name>
        <dbReference type="ChEBI" id="CHEBI:37565"/>
    </ligand>
</feature>
<feature type="binding site" evidence="1">
    <location>
        <position position="71"/>
    </location>
    <ligand>
        <name>S-adenosyl-L-methionine</name>
        <dbReference type="ChEBI" id="CHEBI:59789"/>
    </ligand>
</feature>
<feature type="binding site" evidence="1">
    <location>
        <position position="98"/>
    </location>
    <ligand>
        <name>GTP</name>
        <dbReference type="ChEBI" id="CHEBI:37565"/>
    </ligand>
</feature>
<feature type="binding site" evidence="1">
    <location>
        <position position="122"/>
    </location>
    <ligand>
        <name>S-adenosyl-L-methionine</name>
        <dbReference type="ChEBI" id="CHEBI:59789"/>
    </ligand>
</feature>
<feature type="binding site" evidence="1">
    <location>
        <position position="159"/>
    </location>
    <ligand>
        <name>GTP</name>
        <dbReference type="ChEBI" id="CHEBI:37565"/>
    </ligand>
</feature>
<feature type="binding site" evidence="1">
    <location>
        <position position="193"/>
    </location>
    <ligand>
        <name>S-adenosyl-L-methionine</name>
        <dbReference type="ChEBI" id="CHEBI:59789"/>
    </ligand>
</feature>
<feature type="binding site" evidence="1">
    <location>
        <position position="258"/>
    </location>
    <ligand>
        <name>[4Fe-4S] cluster</name>
        <dbReference type="ChEBI" id="CHEBI:49883"/>
        <label>2</label>
        <note>4Fe-4S-substrate</note>
    </ligand>
</feature>
<feature type="binding site" evidence="1">
    <location>
        <position position="261"/>
    </location>
    <ligand>
        <name>[4Fe-4S] cluster</name>
        <dbReference type="ChEBI" id="CHEBI:49883"/>
        <label>2</label>
        <note>4Fe-4S-substrate</note>
    </ligand>
</feature>
<feature type="binding site" evidence="1">
    <location>
        <begin position="263"/>
        <end position="265"/>
    </location>
    <ligand>
        <name>GTP</name>
        <dbReference type="ChEBI" id="CHEBI:37565"/>
    </ligand>
</feature>
<feature type="binding site" evidence="1">
    <location>
        <position position="275"/>
    </location>
    <ligand>
        <name>[4Fe-4S] cluster</name>
        <dbReference type="ChEBI" id="CHEBI:49883"/>
        <label>2</label>
        <note>4Fe-4S-substrate</note>
    </ligand>
</feature>
<organism>
    <name type="scientific">Pseudomonas fluorescens (strain Pf0-1)</name>
    <dbReference type="NCBI Taxonomy" id="205922"/>
    <lineage>
        <taxon>Bacteria</taxon>
        <taxon>Pseudomonadati</taxon>
        <taxon>Pseudomonadota</taxon>
        <taxon>Gammaproteobacteria</taxon>
        <taxon>Pseudomonadales</taxon>
        <taxon>Pseudomonadaceae</taxon>
        <taxon>Pseudomonas</taxon>
    </lineage>
</organism>
<comment type="function">
    <text evidence="1">Catalyzes the cyclization of GTP to (8S)-3',8-cyclo-7,8-dihydroguanosine 5'-triphosphate.</text>
</comment>
<comment type="catalytic activity">
    <reaction evidence="1">
        <text>GTP + AH2 + S-adenosyl-L-methionine = (8S)-3',8-cyclo-7,8-dihydroguanosine 5'-triphosphate + 5'-deoxyadenosine + L-methionine + A + H(+)</text>
        <dbReference type="Rhea" id="RHEA:49576"/>
        <dbReference type="ChEBI" id="CHEBI:13193"/>
        <dbReference type="ChEBI" id="CHEBI:15378"/>
        <dbReference type="ChEBI" id="CHEBI:17319"/>
        <dbReference type="ChEBI" id="CHEBI:17499"/>
        <dbReference type="ChEBI" id="CHEBI:37565"/>
        <dbReference type="ChEBI" id="CHEBI:57844"/>
        <dbReference type="ChEBI" id="CHEBI:59789"/>
        <dbReference type="ChEBI" id="CHEBI:131766"/>
        <dbReference type="EC" id="4.1.99.22"/>
    </reaction>
</comment>
<comment type="cofactor">
    <cofactor evidence="1">
        <name>[4Fe-4S] cluster</name>
        <dbReference type="ChEBI" id="CHEBI:49883"/>
    </cofactor>
    <text evidence="1">Binds 2 [4Fe-4S] clusters. Binds 1 [4Fe-4S] cluster coordinated with 3 cysteines and an exchangeable S-adenosyl-L-methionine and 1 [4Fe-4S] cluster coordinated with 3 cysteines and the GTP-derived substrate.</text>
</comment>
<comment type="pathway">
    <text evidence="1">Cofactor biosynthesis; molybdopterin biosynthesis.</text>
</comment>
<comment type="subunit">
    <text evidence="1">Monomer and homodimer.</text>
</comment>
<comment type="similarity">
    <text evidence="1">Belongs to the radical SAM superfamily. MoaA family.</text>
</comment>
<accession>Q3KAS8</accession>
<keyword id="KW-0004">4Fe-4S</keyword>
<keyword id="KW-0342">GTP-binding</keyword>
<keyword id="KW-0408">Iron</keyword>
<keyword id="KW-0411">Iron-sulfur</keyword>
<keyword id="KW-0456">Lyase</keyword>
<keyword id="KW-0479">Metal-binding</keyword>
<keyword id="KW-0501">Molybdenum cofactor biosynthesis</keyword>
<keyword id="KW-0547">Nucleotide-binding</keyword>
<keyword id="KW-0949">S-adenosyl-L-methionine</keyword>
<proteinExistence type="inferred from homology"/>
<evidence type="ECO:0000255" key="1">
    <source>
        <dbReference type="HAMAP-Rule" id="MF_01225"/>
    </source>
</evidence>
<evidence type="ECO:0000255" key="2">
    <source>
        <dbReference type="PROSITE-ProRule" id="PRU01266"/>
    </source>
</evidence>
<gene>
    <name evidence="1" type="primary">moaA</name>
    <name type="ordered locus">Pfl01_3388</name>
</gene>
<dbReference type="EC" id="4.1.99.22" evidence="1"/>
<dbReference type="EMBL" id="CP000094">
    <property type="protein sequence ID" value="ABA75126.1"/>
    <property type="molecule type" value="Genomic_DNA"/>
</dbReference>
<dbReference type="RefSeq" id="WP_011334760.1">
    <property type="nucleotide sequence ID" value="NC_007492.2"/>
</dbReference>
<dbReference type="SMR" id="Q3KAS8"/>
<dbReference type="KEGG" id="pfo:Pfl01_3388"/>
<dbReference type="eggNOG" id="COG2896">
    <property type="taxonomic scope" value="Bacteria"/>
</dbReference>
<dbReference type="HOGENOM" id="CLU_009273_0_1_6"/>
<dbReference type="UniPathway" id="UPA00344"/>
<dbReference type="Proteomes" id="UP000002704">
    <property type="component" value="Chromosome"/>
</dbReference>
<dbReference type="GO" id="GO:0051539">
    <property type="term" value="F:4 iron, 4 sulfur cluster binding"/>
    <property type="evidence" value="ECO:0007669"/>
    <property type="project" value="UniProtKB-UniRule"/>
</dbReference>
<dbReference type="GO" id="GO:0061799">
    <property type="term" value="F:cyclic pyranopterin monophosphate synthase activity"/>
    <property type="evidence" value="ECO:0007669"/>
    <property type="project" value="TreeGrafter"/>
</dbReference>
<dbReference type="GO" id="GO:0061798">
    <property type="term" value="F:GTP 3',8'-cyclase activity"/>
    <property type="evidence" value="ECO:0007669"/>
    <property type="project" value="UniProtKB-UniRule"/>
</dbReference>
<dbReference type="GO" id="GO:0005525">
    <property type="term" value="F:GTP binding"/>
    <property type="evidence" value="ECO:0007669"/>
    <property type="project" value="UniProtKB-UniRule"/>
</dbReference>
<dbReference type="GO" id="GO:0046872">
    <property type="term" value="F:metal ion binding"/>
    <property type="evidence" value="ECO:0007669"/>
    <property type="project" value="UniProtKB-KW"/>
</dbReference>
<dbReference type="GO" id="GO:1904047">
    <property type="term" value="F:S-adenosyl-L-methionine binding"/>
    <property type="evidence" value="ECO:0007669"/>
    <property type="project" value="UniProtKB-UniRule"/>
</dbReference>
<dbReference type="GO" id="GO:0006777">
    <property type="term" value="P:Mo-molybdopterin cofactor biosynthetic process"/>
    <property type="evidence" value="ECO:0007669"/>
    <property type="project" value="UniProtKB-UniRule"/>
</dbReference>
<dbReference type="CDD" id="cd01335">
    <property type="entry name" value="Radical_SAM"/>
    <property type="match status" value="1"/>
</dbReference>
<dbReference type="CDD" id="cd21117">
    <property type="entry name" value="Twitch_MoaA"/>
    <property type="match status" value="1"/>
</dbReference>
<dbReference type="Gene3D" id="3.20.20.70">
    <property type="entry name" value="Aldolase class I"/>
    <property type="match status" value="1"/>
</dbReference>
<dbReference type="HAMAP" id="MF_01225_B">
    <property type="entry name" value="MoaA_B"/>
    <property type="match status" value="1"/>
</dbReference>
<dbReference type="InterPro" id="IPR013785">
    <property type="entry name" value="Aldolase_TIM"/>
</dbReference>
<dbReference type="InterPro" id="IPR006638">
    <property type="entry name" value="Elp3/MiaA/NifB-like_rSAM"/>
</dbReference>
<dbReference type="InterPro" id="IPR013483">
    <property type="entry name" value="MoaA"/>
</dbReference>
<dbReference type="InterPro" id="IPR000385">
    <property type="entry name" value="MoaA_NifB_PqqE_Fe-S-bd_CS"/>
</dbReference>
<dbReference type="InterPro" id="IPR010505">
    <property type="entry name" value="MoaA_twitch"/>
</dbReference>
<dbReference type="InterPro" id="IPR050105">
    <property type="entry name" value="MoCo_biosynth_MoaA/MoaC"/>
</dbReference>
<dbReference type="InterPro" id="IPR007197">
    <property type="entry name" value="rSAM"/>
</dbReference>
<dbReference type="NCBIfam" id="TIGR02666">
    <property type="entry name" value="moaA"/>
    <property type="match status" value="1"/>
</dbReference>
<dbReference type="PANTHER" id="PTHR22960:SF0">
    <property type="entry name" value="MOLYBDENUM COFACTOR BIOSYNTHESIS PROTEIN 1"/>
    <property type="match status" value="1"/>
</dbReference>
<dbReference type="PANTHER" id="PTHR22960">
    <property type="entry name" value="MOLYBDOPTERIN COFACTOR SYNTHESIS PROTEIN A"/>
    <property type="match status" value="1"/>
</dbReference>
<dbReference type="Pfam" id="PF13353">
    <property type="entry name" value="Fer4_12"/>
    <property type="match status" value="1"/>
</dbReference>
<dbReference type="Pfam" id="PF06463">
    <property type="entry name" value="Mob_synth_C"/>
    <property type="match status" value="1"/>
</dbReference>
<dbReference type="Pfam" id="PF04055">
    <property type="entry name" value="Radical_SAM"/>
    <property type="match status" value="1"/>
</dbReference>
<dbReference type="SFLD" id="SFLDG01383">
    <property type="entry name" value="cyclic_pyranopterin_phosphate"/>
    <property type="match status" value="1"/>
</dbReference>
<dbReference type="SFLD" id="SFLDS00029">
    <property type="entry name" value="Radical_SAM"/>
    <property type="match status" value="1"/>
</dbReference>
<dbReference type="SMART" id="SM00729">
    <property type="entry name" value="Elp3"/>
    <property type="match status" value="1"/>
</dbReference>
<dbReference type="SUPFAM" id="SSF102114">
    <property type="entry name" value="Radical SAM enzymes"/>
    <property type="match status" value="1"/>
</dbReference>
<dbReference type="PROSITE" id="PS01305">
    <property type="entry name" value="MOAA_NIFB_PQQE"/>
    <property type="match status" value="1"/>
</dbReference>
<dbReference type="PROSITE" id="PS51918">
    <property type="entry name" value="RADICAL_SAM"/>
    <property type="match status" value="1"/>
</dbReference>